<dbReference type="EC" id="3.6.-.-" evidence="1"/>
<dbReference type="EMBL" id="CP000243">
    <property type="protein sequence ID" value="ABE09686.1"/>
    <property type="molecule type" value="Genomic_DNA"/>
</dbReference>
<dbReference type="RefSeq" id="WP_001282368.1">
    <property type="nucleotide sequence ID" value="NZ_CP064825.1"/>
</dbReference>
<dbReference type="SMR" id="Q1R4M8"/>
<dbReference type="KEGG" id="eci:UTI89_C4259"/>
<dbReference type="HOGENOM" id="CLU_019624_4_1_6"/>
<dbReference type="Proteomes" id="UP000001952">
    <property type="component" value="Chromosome"/>
</dbReference>
<dbReference type="GO" id="GO:0005829">
    <property type="term" value="C:cytosol"/>
    <property type="evidence" value="ECO:0007669"/>
    <property type="project" value="TreeGrafter"/>
</dbReference>
<dbReference type="GO" id="GO:0005525">
    <property type="term" value="F:GTP binding"/>
    <property type="evidence" value="ECO:0007669"/>
    <property type="project" value="UniProtKB-UniRule"/>
</dbReference>
<dbReference type="GO" id="GO:0003924">
    <property type="term" value="F:GTPase activity"/>
    <property type="evidence" value="ECO:0007669"/>
    <property type="project" value="UniProtKB-UniRule"/>
</dbReference>
<dbReference type="GO" id="GO:0046872">
    <property type="term" value="F:metal ion binding"/>
    <property type="evidence" value="ECO:0007669"/>
    <property type="project" value="UniProtKB-KW"/>
</dbReference>
<dbReference type="GO" id="GO:0030488">
    <property type="term" value="P:tRNA methylation"/>
    <property type="evidence" value="ECO:0007669"/>
    <property type="project" value="TreeGrafter"/>
</dbReference>
<dbReference type="GO" id="GO:0002098">
    <property type="term" value="P:tRNA wobble uridine modification"/>
    <property type="evidence" value="ECO:0007669"/>
    <property type="project" value="TreeGrafter"/>
</dbReference>
<dbReference type="CDD" id="cd04164">
    <property type="entry name" value="trmE"/>
    <property type="match status" value="1"/>
</dbReference>
<dbReference type="CDD" id="cd14858">
    <property type="entry name" value="TrmE_N"/>
    <property type="match status" value="1"/>
</dbReference>
<dbReference type="FunFam" id="3.30.1360.120:FF:000001">
    <property type="entry name" value="tRNA modification GTPase MnmE"/>
    <property type="match status" value="1"/>
</dbReference>
<dbReference type="FunFam" id="3.40.50.300:FF:000249">
    <property type="entry name" value="tRNA modification GTPase MnmE"/>
    <property type="match status" value="1"/>
</dbReference>
<dbReference type="Gene3D" id="3.40.50.300">
    <property type="entry name" value="P-loop containing nucleotide triphosphate hydrolases"/>
    <property type="match status" value="1"/>
</dbReference>
<dbReference type="Gene3D" id="3.30.1360.120">
    <property type="entry name" value="Probable tRNA modification gtpase trme, domain 1"/>
    <property type="match status" value="1"/>
</dbReference>
<dbReference type="Gene3D" id="1.20.120.430">
    <property type="entry name" value="tRNA modification GTPase MnmE domain 2"/>
    <property type="match status" value="1"/>
</dbReference>
<dbReference type="HAMAP" id="MF_00379">
    <property type="entry name" value="GTPase_MnmE"/>
    <property type="match status" value="1"/>
</dbReference>
<dbReference type="InterPro" id="IPR031168">
    <property type="entry name" value="G_TrmE"/>
</dbReference>
<dbReference type="InterPro" id="IPR006073">
    <property type="entry name" value="GTP-bd"/>
</dbReference>
<dbReference type="InterPro" id="IPR018948">
    <property type="entry name" value="GTP-bd_TrmE_N"/>
</dbReference>
<dbReference type="InterPro" id="IPR004520">
    <property type="entry name" value="GTPase_MnmE"/>
</dbReference>
<dbReference type="InterPro" id="IPR027368">
    <property type="entry name" value="MnmE_dom2"/>
</dbReference>
<dbReference type="InterPro" id="IPR025867">
    <property type="entry name" value="MnmE_helical"/>
</dbReference>
<dbReference type="InterPro" id="IPR027417">
    <property type="entry name" value="P-loop_NTPase"/>
</dbReference>
<dbReference type="InterPro" id="IPR005225">
    <property type="entry name" value="Small_GTP-bd"/>
</dbReference>
<dbReference type="InterPro" id="IPR027266">
    <property type="entry name" value="TrmE/GcvT_dom1"/>
</dbReference>
<dbReference type="NCBIfam" id="TIGR00450">
    <property type="entry name" value="mnmE_trmE_thdF"/>
    <property type="match status" value="1"/>
</dbReference>
<dbReference type="NCBIfam" id="NF003661">
    <property type="entry name" value="PRK05291.1-3"/>
    <property type="match status" value="1"/>
</dbReference>
<dbReference type="NCBIfam" id="TIGR00231">
    <property type="entry name" value="small_GTP"/>
    <property type="match status" value="1"/>
</dbReference>
<dbReference type="PANTHER" id="PTHR42714">
    <property type="entry name" value="TRNA MODIFICATION GTPASE GTPBP3"/>
    <property type="match status" value="1"/>
</dbReference>
<dbReference type="PANTHER" id="PTHR42714:SF2">
    <property type="entry name" value="TRNA MODIFICATION GTPASE GTPBP3, MITOCHONDRIAL"/>
    <property type="match status" value="1"/>
</dbReference>
<dbReference type="Pfam" id="PF01926">
    <property type="entry name" value="MMR_HSR1"/>
    <property type="match status" value="1"/>
</dbReference>
<dbReference type="Pfam" id="PF12631">
    <property type="entry name" value="MnmE_helical"/>
    <property type="match status" value="1"/>
</dbReference>
<dbReference type="Pfam" id="PF10396">
    <property type="entry name" value="TrmE_N"/>
    <property type="match status" value="1"/>
</dbReference>
<dbReference type="SUPFAM" id="SSF52540">
    <property type="entry name" value="P-loop containing nucleoside triphosphate hydrolases"/>
    <property type="match status" value="1"/>
</dbReference>
<dbReference type="SUPFAM" id="SSF116878">
    <property type="entry name" value="TrmE connector domain"/>
    <property type="match status" value="1"/>
</dbReference>
<dbReference type="PROSITE" id="PS51709">
    <property type="entry name" value="G_TRME"/>
    <property type="match status" value="1"/>
</dbReference>
<gene>
    <name evidence="1" type="primary">mnmE</name>
    <name evidence="1" type="synonym">trmE</name>
    <name type="ordered locus">UTI89_C4259</name>
</gene>
<evidence type="ECO:0000255" key="1">
    <source>
        <dbReference type="HAMAP-Rule" id="MF_00379"/>
    </source>
</evidence>
<sequence>MSDNDTIVAQATPPGRGGVGILRISGLKAREVAETVLGKLPKPRYADYLPFKDADGSVLDQGIALWFPGPNSFTGEDVLELQGHGGPVILDLLLKRILTIPGLRIARPGEFSERAFLNDKLDLAQAEAIADLIDASSEQAARSALNSLQGAFSARVNHLVEALTHLRIYVEAAIDFPDEEIDFLSDGKIEAQLNNVIADLDAVRAEARQGSLLREGMKVVIAGRPNAGKSSLLNALAGREAAIVTDIAGTTRDVLREHIHIDGMPLHIIDTAGLREASDEVERIGIERAWQEIEQADRVLFMVDGTTTDAVDPAEIWPEFIARLPAKLPITVVRNKADITGETLGMSEVNGHALIRLSARTGEGVDVLRNHLKQSMGFDTNMEGGFLARRRHLQALEQAAEHLQQGKAQLLGAWAGELLAEELRLAQQNLSEITGEFTSDDLLGRIFSSFCIGK</sequence>
<name>MNME_ECOUT</name>
<reference key="1">
    <citation type="journal article" date="2006" name="Proc. Natl. Acad. Sci. U.S.A.">
        <title>Identification of genes subject to positive selection in uropathogenic strains of Escherichia coli: a comparative genomics approach.</title>
        <authorList>
            <person name="Chen S.L."/>
            <person name="Hung C.-S."/>
            <person name="Xu J."/>
            <person name="Reigstad C.S."/>
            <person name="Magrini V."/>
            <person name="Sabo A."/>
            <person name="Blasiar D."/>
            <person name="Bieri T."/>
            <person name="Meyer R.R."/>
            <person name="Ozersky P."/>
            <person name="Armstrong J.R."/>
            <person name="Fulton R.S."/>
            <person name="Latreille J.P."/>
            <person name="Spieth J."/>
            <person name="Hooton T.M."/>
            <person name="Mardis E.R."/>
            <person name="Hultgren S.J."/>
            <person name="Gordon J.I."/>
        </authorList>
    </citation>
    <scope>NUCLEOTIDE SEQUENCE [LARGE SCALE GENOMIC DNA]</scope>
    <source>
        <strain>UTI89 / UPEC</strain>
    </source>
</reference>
<protein>
    <recommendedName>
        <fullName evidence="1">tRNA modification GTPase MnmE</fullName>
        <ecNumber evidence="1">3.6.-.-</ecNumber>
    </recommendedName>
</protein>
<comment type="function">
    <text evidence="1">Exhibits a very high intrinsic GTPase hydrolysis rate. Involved in the addition of a carboxymethylaminomethyl (cmnm) group at the wobble position (U34) of certain tRNAs, forming tRNA-cmnm(5)s(2)U34.</text>
</comment>
<comment type="cofactor">
    <cofactor evidence="1">
        <name>K(+)</name>
        <dbReference type="ChEBI" id="CHEBI:29103"/>
    </cofactor>
    <text evidence="1">Binds 1 potassium ion per subunit.</text>
</comment>
<comment type="subunit">
    <text evidence="1">Homodimer. Heterotetramer of two MnmE and two MnmG subunits.</text>
</comment>
<comment type="subcellular location">
    <subcellularLocation>
        <location evidence="1">Cytoplasm</location>
    </subcellularLocation>
</comment>
<comment type="similarity">
    <text evidence="1">Belongs to the TRAFAC class TrmE-Era-EngA-EngB-Septin-like GTPase superfamily. TrmE GTPase family.</text>
</comment>
<keyword id="KW-0963">Cytoplasm</keyword>
<keyword id="KW-0342">GTP-binding</keyword>
<keyword id="KW-0378">Hydrolase</keyword>
<keyword id="KW-0460">Magnesium</keyword>
<keyword id="KW-0479">Metal-binding</keyword>
<keyword id="KW-0547">Nucleotide-binding</keyword>
<keyword id="KW-0630">Potassium</keyword>
<keyword id="KW-0819">tRNA processing</keyword>
<proteinExistence type="inferred from homology"/>
<organism>
    <name type="scientific">Escherichia coli (strain UTI89 / UPEC)</name>
    <dbReference type="NCBI Taxonomy" id="364106"/>
    <lineage>
        <taxon>Bacteria</taxon>
        <taxon>Pseudomonadati</taxon>
        <taxon>Pseudomonadota</taxon>
        <taxon>Gammaproteobacteria</taxon>
        <taxon>Enterobacterales</taxon>
        <taxon>Enterobacteriaceae</taxon>
        <taxon>Escherichia</taxon>
    </lineage>
</organism>
<accession>Q1R4M8</accession>
<feature type="chain" id="PRO_1000048825" description="tRNA modification GTPase MnmE">
    <location>
        <begin position="1"/>
        <end position="454"/>
    </location>
</feature>
<feature type="domain" description="TrmE-type G">
    <location>
        <begin position="216"/>
        <end position="377"/>
    </location>
</feature>
<feature type="binding site" evidence="1">
    <location>
        <position position="23"/>
    </location>
    <ligand>
        <name>(6S)-5-formyl-5,6,7,8-tetrahydrofolate</name>
        <dbReference type="ChEBI" id="CHEBI:57457"/>
    </ligand>
</feature>
<feature type="binding site" evidence="1">
    <location>
        <position position="80"/>
    </location>
    <ligand>
        <name>(6S)-5-formyl-5,6,7,8-tetrahydrofolate</name>
        <dbReference type="ChEBI" id="CHEBI:57457"/>
    </ligand>
</feature>
<feature type="binding site" evidence="1">
    <location>
        <position position="120"/>
    </location>
    <ligand>
        <name>(6S)-5-formyl-5,6,7,8-tetrahydrofolate</name>
        <dbReference type="ChEBI" id="CHEBI:57457"/>
    </ligand>
</feature>
<feature type="binding site" evidence="1">
    <location>
        <begin position="226"/>
        <end position="231"/>
    </location>
    <ligand>
        <name>GTP</name>
        <dbReference type="ChEBI" id="CHEBI:37565"/>
    </ligand>
</feature>
<feature type="binding site" evidence="1">
    <location>
        <position position="226"/>
    </location>
    <ligand>
        <name>K(+)</name>
        <dbReference type="ChEBI" id="CHEBI:29103"/>
    </ligand>
</feature>
<feature type="binding site" evidence="1">
    <location>
        <position position="230"/>
    </location>
    <ligand>
        <name>Mg(2+)</name>
        <dbReference type="ChEBI" id="CHEBI:18420"/>
    </ligand>
</feature>
<feature type="binding site" evidence="1">
    <location>
        <begin position="245"/>
        <end position="251"/>
    </location>
    <ligand>
        <name>GTP</name>
        <dbReference type="ChEBI" id="CHEBI:37565"/>
    </ligand>
</feature>
<feature type="binding site" evidence="1">
    <location>
        <position position="245"/>
    </location>
    <ligand>
        <name>K(+)</name>
        <dbReference type="ChEBI" id="CHEBI:29103"/>
    </ligand>
</feature>
<feature type="binding site" evidence="1">
    <location>
        <position position="247"/>
    </location>
    <ligand>
        <name>K(+)</name>
        <dbReference type="ChEBI" id="CHEBI:29103"/>
    </ligand>
</feature>
<feature type="binding site" evidence="1">
    <location>
        <position position="250"/>
    </location>
    <ligand>
        <name>K(+)</name>
        <dbReference type="ChEBI" id="CHEBI:29103"/>
    </ligand>
</feature>
<feature type="binding site" evidence="1">
    <location>
        <position position="251"/>
    </location>
    <ligand>
        <name>Mg(2+)</name>
        <dbReference type="ChEBI" id="CHEBI:18420"/>
    </ligand>
</feature>
<feature type="binding site" evidence="1">
    <location>
        <begin position="270"/>
        <end position="273"/>
    </location>
    <ligand>
        <name>GTP</name>
        <dbReference type="ChEBI" id="CHEBI:37565"/>
    </ligand>
</feature>
<feature type="binding site" evidence="1">
    <location>
        <begin position="335"/>
        <end position="338"/>
    </location>
    <ligand>
        <name>GTP</name>
        <dbReference type="ChEBI" id="CHEBI:37565"/>
    </ligand>
</feature>
<feature type="binding site" evidence="1">
    <location>
        <begin position="358"/>
        <end position="360"/>
    </location>
    <ligand>
        <name>GTP</name>
        <dbReference type="ChEBI" id="CHEBI:37565"/>
    </ligand>
</feature>
<feature type="binding site" evidence="1">
    <location>
        <position position="454"/>
    </location>
    <ligand>
        <name>(6S)-5-formyl-5,6,7,8-tetrahydrofolate</name>
        <dbReference type="ChEBI" id="CHEBI:57457"/>
    </ligand>
</feature>